<evidence type="ECO:0000255" key="1">
    <source>
        <dbReference type="HAMAP-Rule" id="MF_00412"/>
    </source>
</evidence>
<name>PROA_CUPPJ</name>
<reference key="1">
    <citation type="journal article" date="2010" name="PLoS ONE">
        <title>The complete multipartite genome sequence of Cupriavidus necator JMP134, a versatile pollutant degrader.</title>
        <authorList>
            <person name="Lykidis A."/>
            <person name="Perez-Pantoja D."/>
            <person name="Ledger T."/>
            <person name="Mavromatis K."/>
            <person name="Anderson I.J."/>
            <person name="Ivanova N.N."/>
            <person name="Hooper S.D."/>
            <person name="Lapidus A."/>
            <person name="Lucas S."/>
            <person name="Gonzalez B."/>
            <person name="Kyrpides N.C."/>
        </authorList>
    </citation>
    <scope>NUCLEOTIDE SEQUENCE [LARGE SCALE GENOMIC DNA]</scope>
    <source>
        <strain>JMP134 / LMG 1197</strain>
    </source>
</reference>
<organism>
    <name type="scientific">Cupriavidus pinatubonensis (strain JMP 134 / LMG 1197)</name>
    <name type="common">Cupriavidus necator (strain JMP 134)</name>
    <dbReference type="NCBI Taxonomy" id="264198"/>
    <lineage>
        <taxon>Bacteria</taxon>
        <taxon>Pseudomonadati</taxon>
        <taxon>Pseudomonadota</taxon>
        <taxon>Betaproteobacteria</taxon>
        <taxon>Burkholderiales</taxon>
        <taxon>Burkholderiaceae</taxon>
        <taxon>Cupriavidus</taxon>
    </lineage>
</organism>
<protein>
    <recommendedName>
        <fullName evidence="1">Gamma-glutamyl phosphate reductase</fullName>
        <shortName evidence="1">GPR</shortName>
        <ecNumber evidence="1">1.2.1.41</ecNumber>
    </recommendedName>
    <alternativeName>
        <fullName evidence="1">Glutamate-5-semialdehyde dehydrogenase</fullName>
    </alternativeName>
    <alternativeName>
        <fullName evidence="1">Glutamyl-gamma-semialdehyde dehydrogenase</fullName>
        <shortName evidence="1">GSA dehydrogenase</shortName>
    </alternativeName>
</protein>
<gene>
    <name evidence="1" type="primary">proA</name>
    <name type="ordered locus">Reut_A2831</name>
</gene>
<accession>Q46XE1</accession>
<dbReference type="EC" id="1.2.1.41" evidence="1"/>
<dbReference type="EMBL" id="CP000090">
    <property type="protein sequence ID" value="AAZ62192.1"/>
    <property type="molecule type" value="Genomic_DNA"/>
</dbReference>
<dbReference type="SMR" id="Q46XE1"/>
<dbReference type="STRING" id="264198.Reut_A2831"/>
<dbReference type="KEGG" id="reu:Reut_A2831"/>
<dbReference type="eggNOG" id="COG0014">
    <property type="taxonomic scope" value="Bacteria"/>
</dbReference>
<dbReference type="HOGENOM" id="CLU_030231_0_0_4"/>
<dbReference type="OrthoDB" id="9809970at2"/>
<dbReference type="UniPathway" id="UPA00098">
    <property type="reaction ID" value="UER00360"/>
</dbReference>
<dbReference type="GO" id="GO:0005737">
    <property type="term" value="C:cytoplasm"/>
    <property type="evidence" value="ECO:0007669"/>
    <property type="project" value="UniProtKB-SubCell"/>
</dbReference>
<dbReference type="GO" id="GO:0004350">
    <property type="term" value="F:glutamate-5-semialdehyde dehydrogenase activity"/>
    <property type="evidence" value="ECO:0007669"/>
    <property type="project" value="UniProtKB-UniRule"/>
</dbReference>
<dbReference type="GO" id="GO:0050661">
    <property type="term" value="F:NADP binding"/>
    <property type="evidence" value="ECO:0007669"/>
    <property type="project" value="InterPro"/>
</dbReference>
<dbReference type="GO" id="GO:0055129">
    <property type="term" value="P:L-proline biosynthetic process"/>
    <property type="evidence" value="ECO:0007669"/>
    <property type="project" value="UniProtKB-UniRule"/>
</dbReference>
<dbReference type="CDD" id="cd07079">
    <property type="entry name" value="ALDH_F18-19_ProA-GPR"/>
    <property type="match status" value="1"/>
</dbReference>
<dbReference type="FunFam" id="3.40.309.10:FF:000006">
    <property type="entry name" value="Gamma-glutamyl phosphate reductase"/>
    <property type="match status" value="1"/>
</dbReference>
<dbReference type="Gene3D" id="3.40.605.10">
    <property type="entry name" value="Aldehyde Dehydrogenase, Chain A, domain 1"/>
    <property type="match status" value="1"/>
</dbReference>
<dbReference type="Gene3D" id="3.40.309.10">
    <property type="entry name" value="Aldehyde Dehydrogenase, Chain A, domain 2"/>
    <property type="match status" value="1"/>
</dbReference>
<dbReference type="HAMAP" id="MF_00412">
    <property type="entry name" value="ProA"/>
    <property type="match status" value="1"/>
</dbReference>
<dbReference type="InterPro" id="IPR016161">
    <property type="entry name" value="Ald_DH/histidinol_DH"/>
</dbReference>
<dbReference type="InterPro" id="IPR016163">
    <property type="entry name" value="Ald_DH_C"/>
</dbReference>
<dbReference type="InterPro" id="IPR016162">
    <property type="entry name" value="Ald_DH_N"/>
</dbReference>
<dbReference type="InterPro" id="IPR015590">
    <property type="entry name" value="Aldehyde_DH_dom"/>
</dbReference>
<dbReference type="InterPro" id="IPR020593">
    <property type="entry name" value="G-glutamylP_reductase_CS"/>
</dbReference>
<dbReference type="InterPro" id="IPR012134">
    <property type="entry name" value="Glu-5-SA_DH"/>
</dbReference>
<dbReference type="InterPro" id="IPR000965">
    <property type="entry name" value="GPR_dom"/>
</dbReference>
<dbReference type="NCBIfam" id="NF001221">
    <property type="entry name" value="PRK00197.1"/>
    <property type="match status" value="1"/>
</dbReference>
<dbReference type="NCBIfam" id="TIGR00407">
    <property type="entry name" value="proA"/>
    <property type="match status" value="1"/>
</dbReference>
<dbReference type="PANTHER" id="PTHR11063:SF8">
    <property type="entry name" value="DELTA-1-PYRROLINE-5-CARBOXYLATE SYNTHASE"/>
    <property type="match status" value="1"/>
</dbReference>
<dbReference type="PANTHER" id="PTHR11063">
    <property type="entry name" value="GLUTAMATE SEMIALDEHYDE DEHYDROGENASE"/>
    <property type="match status" value="1"/>
</dbReference>
<dbReference type="Pfam" id="PF00171">
    <property type="entry name" value="Aldedh"/>
    <property type="match status" value="2"/>
</dbReference>
<dbReference type="PIRSF" id="PIRSF000151">
    <property type="entry name" value="GPR"/>
    <property type="match status" value="1"/>
</dbReference>
<dbReference type="SUPFAM" id="SSF53720">
    <property type="entry name" value="ALDH-like"/>
    <property type="match status" value="1"/>
</dbReference>
<dbReference type="PROSITE" id="PS01223">
    <property type="entry name" value="PROA"/>
    <property type="match status" value="1"/>
</dbReference>
<comment type="function">
    <text evidence="1">Catalyzes the NADPH-dependent reduction of L-glutamate 5-phosphate into L-glutamate 5-semialdehyde and phosphate. The product spontaneously undergoes cyclization to form 1-pyrroline-5-carboxylate.</text>
</comment>
<comment type="catalytic activity">
    <reaction evidence="1">
        <text>L-glutamate 5-semialdehyde + phosphate + NADP(+) = L-glutamyl 5-phosphate + NADPH + H(+)</text>
        <dbReference type="Rhea" id="RHEA:19541"/>
        <dbReference type="ChEBI" id="CHEBI:15378"/>
        <dbReference type="ChEBI" id="CHEBI:43474"/>
        <dbReference type="ChEBI" id="CHEBI:57783"/>
        <dbReference type="ChEBI" id="CHEBI:58066"/>
        <dbReference type="ChEBI" id="CHEBI:58274"/>
        <dbReference type="ChEBI" id="CHEBI:58349"/>
        <dbReference type="EC" id="1.2.1.41"/>
    </reaction>
</comment>
<comment type="pathway">
    <text evidence="1">Amino-acid biosynthesis; L-proline biosynthesis; L-glutamate 5-semialdehyde from L-glutamate: step 2/2.</text>
</comment>
<comment type="subcellular location">
    <subcellularLocation>
        <location evidence="1">Cytoplasm</location>
    </subcellularLocation>
</comment>
<comment type="similarity">
    <text evidence="1">Belongs to the gamma-glutamyl phosphate reductase family.</text>
</comment>
<proteinExistence type="inferred from homology"/>
<keyword id="KW-0028">Amino-acid biosynthesis</keyword>
<keyword id="KW-0963">Cytoplasm</keyword>
<keyword id="KW-0521">NADP</keyword>
<keyword id="KW-0560">Oxidoreductase</keyword>
<keyword id="KW-0641">Proline biosynthesis</keyword>
<feature type="chain" id="PRO_0000230019" description="Gamma-glutamyl phosphate reductase">
    <location>
        <begin position="1"/>
        <end position="426"/>
    </location>
</feature>
<sequence>MTELDLNQYMDRVGRQARAASRAMARASTADKNRALLTIAAAIRRDADKLKAVNARDVERARANGQDAAFVDRLTLSDKAIKTMAEGLEQIAALADPIGEISNMKFRPTGIQVGQMRVPLGVIGIIYESRPNVTIDAAALCLKSGNATILRGGSEAIESNTALAALVAEGLASAGLPPEAVQVVETTDRAAVGRLITMTEYVDVIVPRGGKSLIARLMEEARVPMIKHLDGICHVFIDADADLDKAVRVCDNAKTQRYAPCNTMETLLVSQDIAARALPPLCRIYQEKGVELRVCPATRAMLEAAGFSGLVDAHEEDWRLEYLAPILAIKTVAGLDEAIAHINEYGSHHTDSIITENYSTGMRFIREVDSASVMINASTRFADGFEYGLGAEIGISNDKLHARGPVGLEGLTSLKYVVFGHGEIRT</sequence>